<keyword id="KW-0032">Aminotransferase</keyword>
<keyword id="KW-0963">Cytoplasm</keyword>
<keyword id="KW-0315">Glutamine amidotransferase</keyword>
<keyword id="KW-1185">Reference proteome</keyword>
<keyword id="KW-0677">Repeat</keyword>
<keyword id="KW-0808">Transferase</keyword>
<dbReference type="EC" id="2.6.1.16" evidence="1"/>
<dbReference type="EMBL" id="AE005673">
    <property type="protein sequence ID" value="AAK22105.1"/>
    <property type="molecule type" value="Genomic_DNA"/>
</dbReference>
<dbReference type="PIR" id="E87263">
    <property type="entry name" value="E87263"/>
</dbReference>
<dbReference type="RefSeq" id="NP_418937.1">
    <property type="nucleotide sequence ID" value="NC_002696.2"/>
</dbReference>
<dbReference type="RefSeq" id="WP_010918007.1">
    <property type="nucleotide sequence ID" value="NC_002696.2"/>
</dbReference>
<dbReference type="SMR" id="Q9ABV2"/>
<dbReference type="STRING" id="190650.CC_0118"/>
<dbReference type="EnsemblBacteria" id="AAK22105">
    <property type="protein sequence ID" value="AAK22105"/>
    <property type="gene ID" value="CC_0118"/>
</dbReference>
<dbReference type="KEGG" id="ccr:CC_0118"/>
<dbReference type="PATRIC" id="fig|190650.5.peg.115"/>
<dbReference type="eggNOG" id="COG0449">
    <property type="taxonomic scope" value="Bacteria"/>
</dbReference>
<dbReference type="HOGENOM" id="CLU_012520_5_2_5"/>
<dbReference type="BioCyc" id="CAULO:CC0118-MONOMER"/>
<dbReference type="Proteomes" id="UP000001816">
    <property type="component" value="Chromosome"/>
</dbReference>
<dbReference type="GO" id="GO:0005829">
    <property type="term" value="C:cytosol"/>
    <property type="evidence" value="ECO:0007669"/>
    <property type="project" value="TreeGrafter"/>
</dbReference>
<dbReference type="GO" id="GO:0097367">
    <property type="term" value="F:carbohydrate derivative binding"/>
    <property type="evidence" value="ECO:0007669"/>
    <property type="project" value="InterPro"/>
</dbReference>
<dbReference type="GO" id="GO:0004360">
    <property type="term" value="F:glutamine-fructose-6-phosphate transaminase (isomerizing) activity"/>
    <property type="evidence" value="ECO:0007669"/>
    <property type="project" value="UniProtKB-UniRule"/>
</dbReference>
<dbReference type="GO" id="GO:0005975">
    <property type="term" value="P:carbohydrate metabolic process"/>
    <property type="evidence" value="ECO:0007669"/>
    <property type="project" value="UniProtKB-UniRule"/>
</dbReference>
<dbReference type="GO" id="GO:0006002">
    <property type="term" value="P:fructose 6-phosphate metabolic process"/>
    <property type="evidence" value="ECO:0007669"/>
    <property type="project" value="TreeGrafter"/>
</dbReference>
<dbReference type="GO" id="GO:0006487">
    <property type="term" value="P:protein N-linked glycosylation"/>
    <property type="evidence" value="ECO:0007669"/>
    <property type="project" value="TreeGrafter"/>
</dbReference>
<dbReference type="GO" id="GO:0006047">
    <property type="term" value="P:UDP-N-acetylglucosamine metabolic process"/>
    <property type="evidence" value="ECO:0007669"/>
    <property type="project" value="TreeGrafter"/>
</dbReference>
<dbReference type="CDD" id="cd00714">
    <property type="entry name" value="GFAT"/>
    <property type="match status" value="1"/>
</dbReference>
<dbReference type="CDD" id="cd05008">
    <property type="entry name" value="SIS_GlmS_GlmD_1"/>
    <property type="match status" value="1"/>
</dbReference>
<dbReference type="CDD" id="cd05009">
    <property type="entry name" value="SIS_GlmS_GlmD_2"/>
    <property type="match status" value="1"/>
</dbReference>
<dbReference type="FunFam" id="3.40.50.10490:FF:000001">
    <property type="entry name" value="Glutamine--fructose-6-phosphate aminotransferase [isomerizing]"/>
    <property type="match status" value="1"/>
</dbReference>
<dbReference type="FunFam" id="3.60.20.10:FF:000006">
    <property type="entry name" value="Glutamine--fructose-6-phosphate aminotransferase [isomerizing]"/>
    <property type="match status" value="1"/>
</dbReference>
<dbReference type="Gene3D" id="3.40.50.10490">
    <property type="entry name" value="Glucose-6-phosphate isomerase like protein, domain 1"/>
    <property type="match status" value="2"/>
</dbReference>
<dbReference type="Gene3D" id="3.60.20.10">
    <property type="entry name" value="Glutamine Phosphoribosylpyrophosphate, subunit 1, domain 1"/>
    <property type="match status" value="1"/>
</dbReference>
<dbReference type="HAMAP" id="MF_00164">
    <property type="entry name" value="GlmS"/>
    <property type="match status" value="1"/>
</dbReference>
<dbReference type="InterPro" id="IPR017932">
    <property type="entry name" value="GATase_2_dom"/>
</dbReference>
<dbReference type="InterPro" id="IPR005855">
    <property type="entry name" value="GFAT"/>
</dbReference>
<dbReference type="InterPro" id="IPR047084">
    <property type="entry name" value="GFAT_N"/>
</dbReference>
<dbReference type="InterPro" id="IPR035466">
    <property type="entry name" value="GlmS/AgaS_SIS"/>
</dbReference>
<dbReference type="InterPro" id="IPR035490">
    <property type="entry name" value="GlmS/FrlB_SIS"/>
</dbReference>
<dbReference type="InterPro" id="IPR029055">
    <property type="entry name" value="Ntn_hydrolases_N"/>
</dbReference>
<dbReference type="InterPro" id="IPR001347">
    <property type="entry name" value="SIS_dom"/>
</dbReference>
<dbReference type="InterPro" id="IPR046348">
    <property type="entry name" value="SIS_dom_sf"/>
</dbReference>
<dbReference type="NCBIfam" id="TIGR01135">
    <property type="entry name" value="glmS"/>
    <property type="match status" value="1"/>
</dbReference>
<dbReference type="NCBIfam" id="NF001484">
    <property type="entry name" value="PRK00331.1"/>
    <property type="match status" value="1"/>
</dbReference>
<dbReference type="PANTHER" id="PTHR10937">
    <property type="entry name" value="GLUCOSAMINE--FRUCTOSE-6-PHOSPHATE AMINOTRANSFERASE, ISOMERIZING"/>
    <property type="match status" value="1"/>
</dbReference>
<dbReference type="PANTHER" id="PTHR10937:SF0">
    <property type="entry name" value="GLUTAMINE--FRUCTOSE-6-PHOSPHATE TRANSAMINASE (ISOMERIZING)"/>
    <property type="match status" value="1"/>
</dbReference>
<dbReference type="Pfam" id="PF13522">
    <property type="entry name" value="GATase_6"/>
    <property type="match status" value="1"/>
</dbReference>
<dbReference type="Pfam" id="PF01380">
    <property type="entry name" value="SIS"/>
    <property type="match status" value="2"/>
</dbReference>
<dbReference type="SUPFAM" id="SSF56235">
    <property type="entry name" value="N-terminal nucleophile aminohydrolases (Ntn hydrolases)"/>
    <property type="match status" value="1"/>
</dbReference>
<dbReference type="SUPFAM" id="SSF53697">
    <property type="entry name" value="SIS domain"/>
    <property type="match status" value="1"/>
</dbReference>
<dbReference type="PROSITE" id="PS51278">
    <property type="entry name" value="GATASE_TYPE_2"/>
    <property type="match status" value="1"/>
</dbReference>
<dbReference type="PROSITE" id="PS51464">
    <property type="entry name" value="SIS"/>
    <property type="match status" value="2"/>
</dbReference>
<sequence>MCGIIGIVGKEPVADRLIESLKRLEYRGYDSAGVAGVVGGKVERRRAQGKIKALEAVLADEPLTATTGIGHTRWATHGAPNVRNAHPHTAGRVTLVHNGIIENFAELKAELAGMGRTFESDTDTEVIAQLIDVALAKGLAPLDAFKATLDRLTGAYALAVLIQGEADLLLGARRGSPLVVGEGQGEMFLGSDALAVGPFTNRVIYLEEGDYVALDHDSRRIFDASGARVERPVRVVPTSSVMLEKGNYRHFMEKEIHDQPEGCQRTIAAYVDTLTSKAAVPGDIDFATLDRIQIVACGTSYIAGVIGKYLIEQLADLPVDVEIASEFRYRTPALRPGSLVVAMSQSGETADTLAALRYCKAKGMKSAVVVNAQESTMAREVDVVWPIHCGPEIGVASTKAFTAQVSVMIALAIAAAKARGTIDAAEEQRLVKVLLEAPRLIAEAIGLEDAIKEIAADVAKARDVLYLGRGPMSALALEGALKLKEISYIHAEGYAAGELKHGPIALVDDQTPIVILAPYDSYFEKSASNMSEVMARGGQVIFITDTEGVKHAPAGAKVVVTAPASDPLVSTLVMSAPIQLLAYHVAVVKGADVDQPRNLAKSVTVE</sequence>
<accession>Q9ABV2</accession>
<feature type="initiator methionine" description="Removed" evidence="1">
    <location>
        <position position="1"/>
    </location>
</feature>
<feature type="chain" id="PRO_0000135315" description="Glutamine--fructose-6-phosphate aminotransferase [isomerizing]">
    <location>
        <begin position="2"/>
        <end position="606"/>
    </location>
</feature>
<feature type="domain" description="Glutamine amidotransferase type-2" evidence="1">
    <location>
        <begin position="2"/>
        <end position="217"/>
    </location>
</feature>
<feature type="domain" description="SIS 1" evidence="1">
    <location>
        <begin position="280"/>
        <end position="421"/>
    </location>
</feature>
<feature type="domain" description="SIS 2" evidence="1">
    <location>
        <begin position="454"/>
        <end position="596"/>
    </location>
</feature>
<feature type="active site" description="Nucleophile; for GATase activity" evidence="1">
    <location>
        <position position="2"/>
    </location>
</feature>
<feature type="active site" description="For Fru-6P isomerization activity" evidence="1">
    <location>
        <position position="601"/>
    </location>
</feature>
<comment type="function">
    <text evidence="1">Catalyzes the first step in hexosamine metabolism, converting fructose-6P into glucosamine-6P using glutamine as a nitrogen source.</text>
</comment>
<comment type="catalytic activity">
    <reaction evidence="1">
        <text>D-fructose 6-phosphate + L-glutamine = D-glucosamine 6-phosphate + L-glutamate</text>
        <dbReference type="Rhea" id="RHEA:13237"/>
        <dbReference type="ChEBI" id="CHEBI:29985"/>
        <dbReference type="ChEBI" id="CHEBI:58359"/>
        <dbReference type="ChEBI" id="CHEBI:58725"/>
        <dbReference type="ChEBI" id="CHEBI:61527"/>
        <dbReference type="EC" id="2.6.1.16"/>
    </reaction>
</comment>
<comment type="subunit">
    <text evidence="1">Homodimer.</text>
</comment>
<comment type="subcellular location">
    <subcellularLocation>
        <location evidence="1">Cytoplasm</location>
    </subcellularLocation>
</comment>
<protein>
    <recommendedName>
        <fullName evidence="1">Glutamine--fructose-6-phosphate aminotransferase [isomerizing]</fullName>
        <ecNumber evidence="1">2.6.1.16</ecNumber>
    </recommendedName>
    <alternativeName>
        <fullName evidence="1">D-fructose-6-phosphate amidotransferase</fullName>
    </alternativeName>
    <alternativeName>
        <fullName evidence="1">GFAT</fullName>
    </alternativeName>
    <alternativeName>
        <fullName evidence="1">Glucosamine-6-phosphate synthase</fullName>
    </alternativeName>
    <alternativeName>
        <fullName evidence="1">Hexosephosphate aminotransferase</fullName>
    </alternativeName>
    <alternativeName>
        <fullName evidence="1">L-glutamine--D-fructose-6-phosphate amidotransferase</fullName>
    </alternativeName>
</protein>
<organism>
    <name type="scientific">Caulobacter vibrioides (strain ATCC 19089 / CIP 103742 / CB 15)</name>
    <name type="common">Caulobacter crescentus</name>
    <dbReference type="NCBI Taxonomy" id="190650"/>
    <lineage>
        <taxon>Bacteria</taxon>
        <taxon>Pseudomonadati</taxon>
        <taxon>Pseudomonadota</taxon>
        <taxon>Alphaproteobacteria</taxon>
        <taxon>Caulobacterales</taxon>
        <taxon>Caulobacteraceae</taxon>
        <taxon>Caulobacter</taxon>
    </lineage>
</organism>
<proteinExistence type="inferred from homology"/>
<reference key="1">
    <citation type="journal article" date="2001" name="Proc. Natl. Acad. Sci. U.S.A.">
        <title>Complete genome sequence of Caulobacter crescentus.</title>
        <authorList>
            <person name="Nierman W.C."/>
            <person name="Feldblyum T.V."/>
            <person name="Laub M.T."/>
            <person name="Paulsen I.T."/>
            <person name="Nelson K.E."/>
            <person name="Eisen J.A."/>
            <person name="Heidelberg J.F."/>
            <person name="Alley M.R.K."/>
            <person name="Ohta N."/>
            <person name="Maddock J.R."/>
            <person name="Potocka I."/>
            <person name="Nelson W.C."/>
            <person name="Newton A."/>
            <person name="Stephens C."/>
            <person name="Phadke N.D."/>
            <person name="Ely B."/>
            <person name="DeBoy R.T."/>
            <person name="Dodson R.J."/>
            <person name="Durkin A.S."/>
            <person name="Gwinn M.L."/>
            <person name="Haft D.H."/>
            <person name="Kolonay J.F."/>
            <person name="Smit J."/>
            <person name="Craven M.B."/>
            <person name="Khouri H.M."/>
            <person name="Shetty J."/>
            <person name="Berry K.J."/>
            <person name="Utterback T.R."/>
            <person name="Tran K."/>
            <person name="Wolf A.M."/>
            <person name="Vamathevan J.J."/>
            <person name="Ermolaeva M.D."/>
            <person name="White O."/>
            <person name="Salzberg S.L."/>
            <person name="Venter J.C."/>
            <person name="Shapiro L."/>
            <person name="Fraser C.M."/>
        </authorList>
    </citation>
    <scope>NUCLEOTIDE SEQUENCE [LARGE SCALE GENOMIC DNA]</scope>
    <source>
        <strain>ATCC 19089 / CIP 103742 / CB 15</strain>
    </source>
</reference>
<evidence type="ECO:0000255" key="1">
    <source>
        <dbReference type="HAMAP-Rule" id="MF_00164"/>
    </source>
</evidence>
<gene>
    <name evidence="1" type="primary">glmS</name>
    <name type="ordered locus">CC_0118</name>
</gene>
<name>GLMS_CAUVC</name>